<dbReference type="EMBL" id="U30501">
    <property type="protein sequence ID" value="AAA96389.1"/>
    <property type="molecule type" value="Genomic_DNA"/>
</dbReference>
<dbReference type="EMBL" id="AE000512">
    <property type="protein sequence ID" value="AAD35782.1"/>
    <property type="molecule type" value="Genomic_DNA"/>
</dbReference>
<dbReference type="PIR" id="B72346">
    <property type="entry name" value="B72346"/>
</dbReference>
<dbReference type="RefSeq" id="NP_228509.1">
    <property type="nucleotide sequence ID" value="NC_000853.1"/>
</dbReference>
<dbReference type="RefSeq" id="WP_004081049.1">
    <property type="nucleotide sequence ID" value="NZ_CP011107.1"/>
</dbReference>
<dbReference type="PDB" id="1TMY">
    <property type="method" value="X-ray"/>
    <property type="resolution" value="1.90 A"/>
    <property type="chains" value="A=1-120"/>
</dbReference>
<dbReference type="PDB" id="1U0S">
    <property type="method" value="X-ray"/>
    <property type="resolution" value="1.90 A"/>
    <property type="chains" value="Y=2-119"/>
</dbReference>
<dbReference type="PDB" id="2LLE">
    <property type="method" value="NMR"/>
    <property type="chains" value="A=1-103"/>
</dbReference>
<dbReference type="PDB" id="2TMY">
    <property type="method" value="X-ray"/>
    <property type="resolution" value="2.30 A"/>
    <property type="chains" value="A=1-120"/>
</dbReference>
<dbReference type="PDB" id="3TMY">
    <property type="method" value="X-ray"/>
    <property type="resolution" value="2.20 A"/>
    <property type="chains" value="A/B=1-120"/>
</dbReference>
<dbReference type="PDB" id="4IGA">
    <property type="method" value="X-ray"/>
    <property type="resolution" value="1.73 A"/>
    <property type="chains" value="A=1-120"/>
</dbReference>
<dbReference type="PDB" id="4QYW">
    <property type="method" value="X-ray"/>
    <property type="resolution" value="1.60 A"/>
    <property type="chains" value="A=2-120"/>
</dbReference>
<dbReference type="PDB" id="4TMY">
    <property type="method" value="X-ray"/>
    <property type="resolution" value="2.80 A"/>
    <property type="chains" value="A/B=1-120"/>
</dbReference>
<dbReference type="PDB" id="6C40">
    <property type="method" value="X-ray"/>
    <property type="resolution" value="2.70 A"/>
    <property type="chains" value="B/D=2-119"/>
</dbReference>
<dbReference type="PDB" id="8Q52">
    <property type="method" value="X-ray"/>
    <property type="resolution" value="2.15 A"/>
    <property type="chains" value="A=4-105"/>
</dbReference>
<dbReference type="PDBsum" id="1TMY"/>
<dbReference type="PDBsum" id="1U0S"/>
<dbReference type="PDBsum" id="2LLE"/>
<dbReference type="PDBsum" id="2TMY"/>
<dbReference type="PDBsum" id="3TMY"/>
<dbReference type="PDBsum" id="4IGA"/>
<dbReference type="PDBsum" id="4QYW"/>
<dbReference type="PDBsum" id="4TMY"/>
<dbReference type="PDBsum" id="6C40"/>
<dbReference type="PDBsum" id="8Q52"/>
<dbReference type="SMR" id="Q56312"/>
<dbReference type="DIP" id="DIP-35249N"/>
<dbReference type="FunCoup" id="Q56312">
    <property type="interactions" value="131"/>
</dbReference>
<dbReference type="IntAct" id="Q56312">
    <property type="interactions" value="2"/>
</dbReference>
<dbReference type="STRING" id="243274.TM_0700"/>
<dbReference type="PaxDb" id="243274-THEMA_01165"/>
<dbReference type="EnsemblBacteria" id="AAD35782">
    <property type="protein sequence ID" value="AAD35782"/>
    <property type="gene ID" value="TM_0700"/>
</dbReference>
<dbReference type="KEGG" id="tma:TM0700"/>
<dbReference type="KEGG" id="tmi:THEMA_01165"/>
<dbReference type="KEGG" id="tmm:Tmari_0700"/>
<dbReference type="KEGG" id="tmw:THMA_0715"/>
<dbReference type="eggNOG" id="COG2201">
    <property type="taxonomic scope" value="Bacteria"/>
</dbReference>
<dbReference type="InParanoid" id="Q56312"/>
<dbReference type="OrthoDB" id="9793421at2"/>
<dbReference type="EvolutionaryTrace" id="Q56312"/>
<dbReference type="Proteomes" id="UP000008183">
    <property type="component" value="Chromosome"/>
</dbReference>
<dbReference type="GO" id="GO:0005737">
    <property type="term" value="C:cytoplasm"/>
    <property type="evidence" value="ECO:0007669"/>
    <property type="project" value="UniProtKB-SubCell"/>
</dbReference>
<dbReference type="GO" id="GO:0046872">
    <property type="term" value="F:metal ion binding"/>
    <property type="evidence" value="ECO:0007669"/>
    <property type="project" value="UniProtKB-KW"/>
</dbReference>
<dbReference type="GO" id="GO:0097588">
    <property type="term" value="P:archaeal or bacterial-type flagellum-dependent cell motility"/>
    <property type="evidence" value="ECO:0007669"/>
    <property type="project" value="UniProtKB-KW"/>
</dbReference>
<dbReference type="GO" id="GO:0006935">
    <property type="term" value="P:chemotaxis"/>
    <property type="evidence" value="ECO:0007669"/>
    <property type="project" value="UniProtKB-KW"/>
</dbReference>
<dbReference type="GO" id="GO:0000160">
    <property type="term" value="P:phosphorelay signal transduction system"/>
    <property type="evidence" value="ECO:0007669"/>
    <property type="project" value="UniProtKB-KW"/>
</dbReference>
<dbReference type="CDD" id="cd17542">
    <property type="entry name" value="REC_CheY"/>
    <property type="match status" value="1"/>
</dbReference>
<dbReference type="Gene3D" id="3.40.50.2300">
    <property type="match status" value="1"/>
</dbReference>
<dbReference type="InterPro" id="IPR011006">
    <property type="entry name" value="CheY-like_superfamily"/>
</dbReference>
<dbReference type="InterPro" id="IPR001789">
    <property type="entry name" value="Sig_transdc_resp-reg_receiver"/>
</dbReference>
<dbReference type="InterPro" id="IPR052048">
    <property type="entry name" value="ST_Response_Regulator"/>
</dbReference>
<dbReference type="PANTHER" id="PTHR43228">
    <property type="entry name" value="TWO-COMPONENT RESPONSE REGULATOR"/>
    <property type="match status" value="1"/>
</dbReference>
<dbReference type="PANTHER" id="PTHR43228:SF1">
    <property type="entry name" value="TWO-COMPONENT RESPONSE REGULATOR ARR22"/>
    <property type="match status" value="1"/>
</dbReference>
<dbReference type="Pfam" id="PF00072">
    <property type="entry name" value="Response_reg"/>
    <property type="match status" value="1"/>
</dbReference>
<dbReference type="SMART" id="SM00448">
    <property type="entry name" value="REC"/>
    <property type="match status" value="1"/>
</dbReference>
<dbReference type="SUPFAM" id="SSF52172">
    <property type="entry name" value="CheY-like"/>
    <property type="match status" value="1"/>
</dbReference>
<dbReference type="PROSITE" id="PS50110">
    <property type="entry name" value="RESPONSE_REGULATORY"/>
    <property type="match status" value="1"/>
</dbReference>
<protein>
    <recommendedName>
        <fullName>Chemotaxis protein CheY</fullName>
    </recommendedName>
</protein>
<comment type="function">
    <text evidence="2">Involved in the transmission of sensory signals from the chemoreceptors to the flagellar motors. CheY seems to regulate the clockwise (CW) rotation (By similarity).</text>
</comment>
<comment type="cofactor">
    <cofactor evidence="4">
        <name>Mg(2+)</name>
        <dbReference type="ChEBI" id="CHEBI:18420"/>
    </cofactor>
    <text evidence="4">Binds 1 Mg(2+) ion per subunit.</text>
</comment>
<comment type="interaction">
    <interactant intactId="EBI-1039694">
        <id>Q56312</id>
    </interactant>
    <interactant intactId="EBI-6981685">
        <id>Q9WZE6</id>
        <label>fliM</label>
    </interactant>
    <organismsDiffer>false</organismsDiffer>
    <experiments>2</experiments>
</comment>
<comment type="subcellular location">
    <subcellularLocation>
        <location evidence="5">Cytoplasm</location>
    </subcellularLocation>
</comment>
<comment type="PTM">
    <text evidence="2">Phosphorylated by CheA.</text>
</comment>
<feature type="chain" id="PRO_0000081055" description="Chemotaxis protein CheY">
    <location>
        <begin position="1"/>
        <end position="120"/>
    </location>
</feature>
<feature type="domain" description="Response regulatory" evidence="3">
    <location>
        <begin position="4"/>
        <end position="119"/>
    </location>
</feature>
<feature type="binding site" evidence="1">
    <location>
        <position position="9"/>
    </location>
    <ligand>
        <name>Mg(2+)</name>
        <dbReference type="ChEBI" id="CHEBI:18420"/>
    </ligand>
</feature>
<feature type="binding site" evidence="4 6">
    <location>
        <position position="10"/>
    </location>
    <ligand>
        <name>Mg(2+)</name>
        <dbReference type="ChEBI" id="CHEBI:18420"/>
    </ligand>
</feature>
<feature type="binding site" evidence="4 6">
    <location>
        <position position="54"/>
    </location>
    <ligand>
        <name>Mg(2+)</name>
        <dbReference type="ChEBI" id="CHEBI:18420"/>
    </ligand>
</feature>
<feature type="binding site" evidence="4 6">
    <location>
        <position position="56"/>
    </location>
    <ligand>
        <name>Mg(2+)</name>
        <dbReference type="ChEBI" id="CHEBI:18420"/>
    </ligand>
</feature>
<feature type="modified residue" description="4-aspartylphosphate" evidence="3 4">
    <location>
        <position position="54"/>
    </location>
</feature>
<feature type="strand" evidence="7">
    <location>
        <begin position="4"/>
        <end position="8"/>
    </location>
</feature>
<feature type="helix" evidence="7">
    <location>
        <begin position="12"/>
        <end position="24"/>
    </location>
</feature>
<feature type="strand" evidence="7">
    <location>
        <begin position="28"/>
        <end position="35"/>
    </location>
</feature>
<feature type="helix" evidence="7">
    <location>
        <begin position="36"/>
        <end position="46"/>
    </location>
</feature>
<feature type="strand" evidence="7">
    <location>
        <begin position="49"/>
        <end position="56"/>
    </location>
</feature>
<feature type="strand" evidence="7">
    <location>
        <begin position="58"/>
        <end position="60"/>
    </location>
</feature>
<feature type="helix" evidence="7">
    <location>
        <begin position="62"/>
        <end position="72"/>
    </location>
</feature>
<feature type="strand" evidence="7">
    <location>
        <begin position="78"/>
        <end position="83"/>
    </location>
</feature>
<feature type="helix" evidence="7">
    <location>
        <begin position="87"/>
        <end position="95"/>
    </location>
</feature>
<feature type="strand" evidence="7">
    <location>
        <begin position="100"/>
        <end position="105"/>
    </location>
</feature>
<feature type="helix" evidence="7">
    <location>
        <begin position="108"/>
        <end position="118"/>
    </location>
</feature>
<organism>
    <name type="scientific">Thermotoga maritima (strain ATCC 43589 / DSM 3109 / JCM 10099 / NBRC 100826 / MSB8)</name>
    <dbReference type="NCBI Taxonomy" id="243274"/>
    <lineage>
        <taxon>Bacteria</taxon>
        <taxon>Thermotogati</taxon>
        <taxon>Thermotogota</taxon>
        <taxon>Thermotogae</taxon>
        <taxon>Thermotogales</taxon>
        <taxon>Thermotogaceae</taxon>
        <taxon>Thermotoga</taxon>
    </lineage>
</organism>
<accession>Q56312</accession>
<keyword id="KW-0002">3D-structure</keyword>
<keyword id="KW-0145">Chemotaxis</keyword>
<keyword id="KW-0963">Cytoplasm</keyword>
<keyword id="KW-0283">Flagellar rotation</keyword>
<keyword id="KW-0460">Magnesium</keyword>
<keyword id="KW-0479">Metal-binding</keyword>
<keyword id="KW-0597">Phosphoprotein</keyword>
<keyword id="KW-1185">Reference proteome</keyword>
<keyword id="KW-0902">Two-component regulatory system</keyword>
<gene>
    <name type="primary">cheY</name>
    <name type="ordered locus">TM_0700</name>
</gene>
<reference key="1">
    <citation type="journal article" date="1996" name="J. Bacteriol.">
        <title>Thermostable chemotaxis proteins from the hyperthermophilic bacterium Thermotoga maritima.</title>
        <authorList>
            <person name="Swanson R.V."/>
            <person name="Sanna M.G."/>
            <person name="Simon M.I."/>
        </authorList>
    </citation>
    <scope>NUCLEOTIDE SEQUENCE [GENOMIC DNA]</scope>
    <scope>CHARACTERIZATION</scope>
</reference>
<reference key="2">
    <citation type="journal article" date="1999" name="Nature">
        <title>Evidence for lateral gene transfer between Archaea and Bacteria from genome sequence of Thermotoga maritima.</title>
        <authorList>
            <person name="Nelson K.E."/>
            <person name="Clayton R.A."/>
            <person name="Gill S.R."/>
            <person name="Gwinn M.L."/>
            <person name="Dodson R.J."/>
            <person name="Haft D.H."/>
            <person name="Hickey E.K."/>
            <person name="Peterson J.D."/>
            <person name="Nelson W.C."/>
            <person name="Ketchum K.A."/>
            <person name="McDonald L.A."/>
            <person name="Utterback T.R."/>
            <person name="Malek J.A."/>
            <person name="Linher K.D."/>
            <person name="Garrett M.M."/>
            <person name="Stewart A.M."/>
            <person name="Cotton M.D."/>
            <person name="Pratt M.S."/>
            <person name="Phillips C.A."/>
            <person name="Richardson D.L."/>
            <person name="Heidelberg J.F."/>
            <person name="Sutton G.G."/>
            <person name="Fleischmann R.D."/>
            <person name="Eisen J.A."/>
            <person name="White O."/>
            <person name="Salzberg S.L."/>
            <person name="Smith H.O."/>
            <person name="Venter J.C."/>
            <person name="Fraser C.M."/>
        </authorList>
    </citation>
    <scope>NUCLEOTIDE SEQUENCE [LARGE SCALE GENOMIC DNA]</scope>
    <source>
        <strain>ATCC 43589 / DSM 3109 / JCM 10099 / NBRC 100826 / MSB8</strain>
    </source>
</reference>
<reference key="3">
    <citation type="journal article" date="1998" name="Protein Sci.">
        <title>Crystal structures of CheY from Thermotoga maritima do not support conventional explanations for the structural basis of enhanced thermostability.</title>
        <authorList>
            <person name="Usher K.C."/>
            <person name="de la Cruz A.F.A."/>
            <person name="Dahlquist F.W."/>
            <person name="Swanson R.V."/>
            <person name="Simon M.I."/>
            <person name="Remington S.J."/>
        </authorList>
    </citation>
    <scope>X-RAY CRYSTALLOGRAPHY (1.9 ANGSTROMS) IN COMPLEX WITH MG(2+)</scope>
    <scope>COFACTOR</scope>
    <scope>PHOSPHORYLATION AT ASP-54</scope>
</reference>
<name>CHEY_THEMA</name>
<sequence length="120" mass="13217">MGKRVLIVDDAAFMRMMLKDIITKAGYEVAGEATNGREAVEKYKELKPDIVTMDITMPEMNGIDAIKEIMKIDPNAKIIVCSAMGQQAMVIEAIKAGAKDFIVKPFQPSRVVEALNKVSK</sequence>
<proteinExistence type="evidence at protein level"/>
<evidence type="ECO:0000250" key="1">
    <source>
        <dbReference type="UniProtKB" id="A0A0H3AMJ9"/>
    </source>
</evidence>
<evidence type="ECO:0000250" key="2">
    <source>
        <dbReference type="UniProtKB" id="P0AE67"/>
    </source>
</evidence>
<evidence type="ECO:0000255" key="3">
    <source>
        <dbReference type="PROSITE-ProRule" id="PRU00169"/>
    </source>
</evidence>
<evidence type="ECO:0000269" key="4">
    <source>
    </source>
</evidence>
<evidence type="ECO:0000305" key="5"/>
<evidence type="ECO:0007744" key="6">
    <source>
        <dbReference type="PDB" id="4TMY"/>
    </source>
</evidence>
<evidence type="ECO:0007829" key="7">
    <source>
        <dbReference type="PDB" id="4QYW"/>
    </source>
</evidence>